<comment type="function">
    <text evidence="2 3 6">A beta-galactoside alpha2-3 sialyltransferase involved in terminal sialylation of glycoproteins and glycolipids. Catalyzes the transfer of sialic acid (N-acetyl-neuraminic acid; Neu5Ac) from the nucleotide sugar donor CMP-Neu5Ac onto acceptor Galbeta-(1-&gt;3)-GalNAc- and Galbeta-(1-&gt;4)-GlcNAc-terminated glycoconjugates through an alpha2-3 linkage (By similarity). Plays a major role in hemostasis. Responsible for sialylation of plasma VWF/von Willebrand factor, preventing its recognition by asialoglycoprotein receptors (ASGPR) and subsequent clearance. Regulates ASGPR-mediated clearance of platelets (By similarity). Participates in the biosynthesis of the sialyl Lewis X epitopes, both on O- and N-glycans, which are recognized by SELE/E-selectin, SELP/P-selectin and SELL/L-selectin. Essential for selectin-mediated rolling and adhesion of leukocytes during extravasation (By similarity). Contributes to adhesion and transendothelial migration of neutrophils likely through terminal sialylation of CXCR2 (By similarity). In glycosphingolipid biosynthesis, sialylates GM1 and GA1 gangliosides to form GD1a and GM1b, respectively (By similarity). Metabolizes brain c-series ganglioside GT1c forming GQ1c (Probable). Synthesizes ganglioside LM1 (IV3Neu5Ac-nLc4Cer), a major structural component of peripheral nerve myelin (By similarity).</text>
</comment>
<comment type="catalytic activity">
    <reaction evidence="2">
        <text>a beta-D-galactosyl-(1-&gt;3)-N-acetyl-beta-D-galactosaminyl derivative + CMP-N-acetyl-beta-neuraminate = an N-acetyl-alpha-neuraminyl-(2-&gt;3)-beta-D-galactosyl-(1-&gt;3)-N-acetyl-beta-D-galactosaminyl derivative + CMP + H(+)</text>
        <dbReference type="Rhea" id="RHEA:52380"/>
        <dbReference type="ChEBI" id="CHEBI:15378"/>
        <dbReference type="ChEBI" id="CHEBI:57812"/>
        <dbReference type="ChEBI" id="CHEBI:60377"/>
        <dbReference type="ChEBI" id="CHEBI:136588"/>
        <dbReference type="ChEBI" id="CHEBI:136589"/>
        <dbReference type="EC" id="2.4.3.2"/>
    </reaction>
    <physiologicalReaction direction="left-to-right" evidence="2">
        <dbReference type="Rhea" id="RHEA:52381"/>
    </physiologicalReaction>
</comment>
<comment type="catalytic activity">
    <reaction evidence="2">
        <text>a beta-D-galactosyl-(1-&gt;3)-N-acetyl-alpha-D-galactosaminyl derivative + CMP-N-acetyl-beta-neuraminate = an N-acetyl-alpha-neuraminyl-(2-&gt;3)-beta-D-galactosyl-(1-&gt;3)-N-acetyl-alpha-D-galactosaminyl derivative + CMP + H(+)</text>
        <dbReference type="Rhea" id="RHEA:21616"/>
        <dbReference type="ChEBI" id="CHEBI:15378"/>
        <dbReference type="ChEBI" id="CHEBI:57812"/>
        <dbReference type="ChEBI" id="CHEBI:60377"/>
        <dbReference type="ChEBI" id="CHEBI:133470"/>
        <dbReference type="ChEBI" id="CHEBI:139596"/>
        <dbReference type="EC" id="2.4.3.4"/>
    </reaction>
    <physiologicalReaction direction="left-to-right" evidence="2">
        <dbReference type="Rhea" id="RHEA:21617"/>
    </physiologicalReaction>
</comment>
<comment type="catalytic activity">
    <reaction evidence="2">
        <text>a beta-D-galactosyl-(1-&gt;4)-N-acetyl-beta-D-glucosaminyl derivative + CMP-N-acetyl-beta-neuraminate = an N-acetyl-alpha-neuraminyl-(2-&gt;3)-beta-D-galactosyl-(1-&gt;4)-N-acetyl-beta-D-glucosaminyl derivative + CMP + H(+)</text>
        <dbReference type="Rhea" id="RHEA:52316"/>
        <dbReference type="ChEBI" id="CHEBI:15378"/>
        <dbReference type="ChEBI" id="CHEBI:57812"/>
        <dbReference type="ChEBI" id="CHEBI:60377"/>
        <dbReference type="ChEBI" id="CHEBI:133507"/>
        <dbReference type="ChEBI" id="CHEBI:136545"/>
        <dbReference type="EC" id="2.4.3.6"/>
    </reaction>
    <physiologicalReaction direction="left-to-right" evidence="2">
        <dbReference type="Rhea" id="RHEA:52317"/>
    </physiologicalReaction>
</comment>
<comment type="catalytic activity">
    <reaction evidence="2">
        <text>a ganglioside GM1 (d18:1(4E)) + CMP-N-acetyl-beta-neuraminate = a ganglioside GD1a (d18:1(4E)) + CMP + H(+)</text>
        <dbReference type="Rhea" id="RHEA:18021"/>
        <dbReference type="ChEBI" id="CHEBI:15378"/>
        <dbReference type="ChEBI" id="CHEBI:57812"/>
        <dbReference type="ChEBI" id="CHEBI:60377"/>
        <dbReference type="ChEBI" id="CHEBI:77709"/>
        <dbReference type="ChEBI" id="CHEBI:78445"/>
        <dbReference type="EC" id="2.4.3.2"/>
    </reaction>
    <physiologicalReaction direction="left-to-right" evidence="2">
        <dbReference type="Rhea" id="RHEA:18022"/>
    </physiologicalReaction>
</comment>
<comment type="catalytic activity">
    <reaction evidence="2">
        <text>a ganglioside GA1 (d18:1(4E)) + CMP-N-acetyl-beta-neuraminate = a ganglioside GM1b (d18:1(4E)) + CMP + H(+)</text>
        <dbReference type="Rhea" id="RHEA:47560"/>
        <dbReference type="ChEBI" id="CHEBI:15378"/>
        <dbReference type="ChEBI" id="CHEBI:27938"/>
        <dbReference type="ChEBI" id="CHEBI:57812"/>
        <dbReference type="ChEBI" id="CHEBI:60377"/>
        <dbReference type="ChEBI" id="CHEBI:78568"/>
    </reaction>
    <physiologicalReaction direction="left-to-right" evidence="2">
        <dbReference type="Rhea" id="RHEA:47561"/>
    </physiologicalReaction>
</comment>
<comment type="catalytic activity">
    <reaction evidence="6">
        <text>a ganglioside GT1c (d18:1(4E)) + CMP-N-acetyl-beta-neuraminate = a ganglioside GQ1c (d18:1(4E)) + CMP + H(+)</text>
        <dbReference type="Rhea" id="RHEA:47588"/>
        <dbReference type="ChEBI" id="CHEBI:15378"/>
        <dbReference type="ChEBI" id="CHEBI:57812"/>
        <dbReference type="ChEBI" id="CHEBI:60377"/>
        <dbReference type="ChEBI" id="CHEBI:87789"/>
        <dbReference type="ChEBI" id="CHEBI:87791"/>
    </reaction>
    <physiologicalReaction direction="left-to-right" evidence="6">
        <dbReference type="Rhea" id="RHEA:47589"/>
    </physiologicalReaction>
</comment>
<comment type="catalytic activity">
    <reaction evidence="2">
        <text>a neolactoside nLc4Cer + CMP-N-acetyl-beta-neuraminate = a neolactoside IV(3)-alpha-NeuAc-nLc4Cer + CMP + H(+)</text>
        <dbReference type="Rhea" id="RHEA:65432"/>
        <dbReference type="ChEBI" id="CHEBI:15378"/>
        <dbReference type="ChEBI" id="CHEBI:57812"/>
        <dbReference type="ChEBI" id="CHEBI:60377"/>
        <dbReference type="ChEBI" id="CHEBI:90376"/>
        <dbReference type="ChEBI" id="CHEBI:90390"/>
    </reaction>
    <physiologicalReaction direction="left-to-right" evidence="2">
        <dbReference type="Rhea" id="RHEA:65433"/>
    </physiologicalReaction>
</comment>
<comment type="catalytic activity">
    <reaction evidence="2">
        <text>a neolactoside nLc4Cer(d18:1(4E)) + CMP-N-acetyl-beta-neuraminate = a neolactoside IV(3)-alpha-NeuAc-nLc4Cer(d18:1(4E)) + CMP + H(+)</text>
        <dbReference type="Rhea" id="RHEA:18913"/>
        <dbReference type="ChEBI" id="CHEBI:15378"/>
        <dbReference type="ChEBI" id="CHEBI:17006"/>
        <dbReference type="ChEBI" id="CHEBI:57812"/>
        <dbReference type="ChEBI" id="CHEBI:58665"/>
        <dbReference type="ChEBI" id="CHEBI:60377"/>
        <dbReference type="EC" id="2.4.3.6"/>
    </reaction>
    <physiologicalReaction direction="left-to-right" evidence="2">
        <dbReference type="Rhea" id="RHEA:18914"/>
    </physiologicalReaction>
</comment>
<comment type="pathway">
    <text evidence="2">Protein modification; protein glycosylation.</text>
</comment>
<comment type="pathway">
    <text evidence="2">Glycolipid biosynthesis.</text>
</comment>
<comment type="subcellular location">
    <subcellularLocation>
        <location evidence="1">Golgi apparatus</location>
        <location evidence="1">Golgi stack membrane</location>
        <topology evidence="1">Single-pass type II membrane protein</topology>
    </subcellularLocation>
    <text evidence="1">Membrane-bound form in trans cisternae of Golgi.</text>
</comment>
<comment type="similarity">
    <text evidence="5">Belongs to the glycosyltransferase 29 family.</text>
</comment>
<evidence type="ECO:0000250" key="1"/>
<evidence type="ECO:0000250" key="2">
    <source>
        <dbReference type="UniProtKB" id="Q11206"/>
    </source>
</evidence>
<evidence type="ECO:0000250" key="3">
    <source>
        <dbReference type="UniProtKB" id="Q91Y74"/>
    </source>
</evidence>
<evidence type="ECO:0000255" key="4"/>
<evidence type="ECO:0000305" key="5"/>
<evidence type="ECO:0000305" key="6">
    <source>
    </source>
</evidence>
<name>SIA4C_RAT</name>
<dbReference type="EC" id="2.4.3.2" evidence="2"/>
<dbReference type="EC" id="2.4.3.4" evidence="2"/>
<dbReference type="EC" id="2.4.3.6" evidence="2"/>
<dbReference type="EMBL" id="AJ626825">
    <property type="protein sequence ID" value="CAF25183.1"/>
    <property type="molecule type" value="mRNA"/>
</dbReference>
<dbReference type="EMBL" id="BC089057">
    <property type="protein sequence ID" value="AAH89057.1"/>
    <property type="molecule type" value="mRNA"/>
</dbReference>
<dbReference type="RefSeq" id="NP_001380792.1">
    <property type="nucleotide sequence ID" value="NM_001393863.1"/>
</dbReference>
<dbReference type="RefSeq" id="NP_001380793.1">
    <property type="nucleotide sequence ID" value="NM_001393864.1"/>
</dbReference>
<dbReference type="RefSeq" id="NP_976082.1">
    <property type="nucleotide sequence ID" value="NM_203337.3"/>
</dbReference>
<dbReference type="RefSeq" id="XP_006242851.1">
    <property type="nucleotide sequence ID" value="XM_006242789.3"/>
</dbReference>
<dbReference type="RefSeq" id="XP_008764282.1">
    <property type="nucleotide sequence ID" value="XM_008766060.3"/>
</dbReference>
<dbReference type="SMR" id="P61131"/>
<dbReference type="FunCoup" id="P61131">
    <property type="interactions" value="119"/>
</dbReference>
<dbReference type="STRING" id="10116.ENSRNOP00000013243"/>
<dbReference type="SwissLipids" id="SLP:000001443"/>
<dbReference type="CAZy" id="GT29">
    <property type="family name" value="Glycosyltransferase Family 29"/>
</dbReference>
<dbReference type="GlyCosmos" id="P61131">
    <property type="glycosylation" value="4 sites, No reported glycans"/>
</dbReference>
<dbReference type="GlyGen" id="P61131">
    <property type="glycosylation" value="4 sites"/>
</dbReference>
<dbReference type="PhosphoSitePlus" id="P61131"/>
<dbReference type="PaxDb" id="10116-ENSRNOP00000013243"/>
<dbReference type="GeneID" id="363040"/>
<dbReference type="KEGG" id="rno:363040"/>
<dbReference type="UCSC" id="RGD:1303068">
    <property type="organism name" value="rat"/>
</dbReference>
<dbReference type="AGR" id="RGD:1303068"/>
<dbReference type="CTD" id="6484"/>
<dbReference type="RGD" id="1303068">
    <property type="gene designation" value="St3gal4"/>
</dbReference>
<dbReference type="VEuPathDB" id="HostDB:ENSRNOG00000009850"/>
<dbReference type="eggNOG" id="KOG2692">
    <property type="taxonomic scope" value="Eukaryota"/>
</dbReference>
<dbReference type="HOGENOM" id="CLU_032020_1_0_1"/>
<dbReference type="InParanoid" id="P61131"/>
<dbReference type="PhylomeDB" id="P61131"/>
<dbReference type="TreeFam" id="TF354325"/>
<dbReference type="Reactome" id="R-RNO-2022854">
    <property type="pathway name" value="Keratan sulfate biosynthesis"/>
</dbReference>
<dbReference type="Reactome" id="R-RNO-4085001">
    <property type="pathway name" value="Sialic acid metabolism"/>
</dbReference>
<dbReference type="Reactome" id="R-RNO-9037629">
    <property type="pathway name" value="Lewis blood group biosynthesis"/>
</dbReference>
<dbReference type="Reactome" id="R-RNO-975577">
    <property type="pathway name" value="N-Glycan antennae elongation"/>
</dbReference>
<dbReference type="Reactome" id="R-RNO-977068">
    <property type="pathway name" value="Termination of O-glycan biosynthesis"/>
</dbReference>
<dbReference type="UniPathway" id="UPA00378"/>
<dbReference type="PRO" id="PR:P61131"/>
<dbReference type="Proteomes" id="UP000002494">
    <property type="component" value="Chromosome 8"/>
</dbReference>
<dbReference type="Bgee" id="ENSRNOG00000009850">
    <property type="expression patterns" value="Expressed in ovary and 20 other cell types or tissues"/>
</dbReference>
<dbReference type="GO" id="GO:0032580">
    <property type="term" value="C:Golgi cisterna membrane"/>
    <property type="evidence" value="ECO:0007669"/>
    <property type="project" value="UniProtKB-SubCell"/>
</dbReference>
<dbReference type="GO" id="GO:0047288">
    <property type="term" value="F:beta-D-galactosyl-(1-&gt;3)-N-acetyl-beta-D-galactosaminide alpha-2,3- sialyltransferase"/>
    <property type="evidence" value="ECO:0000314"/>
    <property type="project" value="RGD"/>
</dbReference>
<dbReference type="GO" id="GO:0003836">
    <property type="term" value="F:beta-galactoside (CMP) alpha-2,3-sialyltransferase activity"/>
    <property type="evidence" value="ECO:0000266"/>
    <property type="project" value="RGD"/>
</dbReference>
<dbReference type="GO" id="GO:0008118">
    <property type="term" value="F:N-acetyllactosaminide alpha-2,3-sialyltransferase activity"/>
    <property type="evidence" value="ECO:0000250"/>
    <property type="project" value="UniProtKB"/>
</dbReference>
<dbReference type="GO" id="GO:0050890">
    <property type="term" value="P:cognition"/>
    <property type="evidence" value="ECO:0000266"/>
    <property type="project" value="RGD"/>
</dbReference>
<dbReference type="GO" id="GO:0009247">
    <property type="term" value="P:glycolipid biosynthetic process"/>
    <property type="evidence" value="ECO:0000266"/>
    <property type="project" value="RGD"/>
</dbReference>
<dbReference type="GO" id="GO:0009101">
    <property type="term" value="P:glycoprotein biosynthetic process"/>
    <property type="evidence" value="ECO:0000266"/>
    <property type="project" value="RGD"/>
</dbReference>
<dbReference type="GO" id="GO:0030259">
    <property type="term" value="P:lipid glycosylation"/>
    <property type="evidence" value="ECO:0000266"/>
    <property type="project" value="RGD"/>
</dbReference>
<dbReference type="GO" id="GO:0009312">
    <property type="term" value="P:oligosaccharide biosynthetic process"/>
    <property type="evidence" value="ECO:0000266"/>
    <property type="project" value="RGD"/>
</dbReference>
<dbReference type="GO" id="GO:0030194">
    <property type="term" value="P:positive regulation of blood coagulation"/>
    <property type="evidence" value="ECO:0000250"/>
    <property type="project" value="UniProtKB"/>
</dbReference>
<dbReference type="GO" id="GO:1903238">
    <property type="term" value="P:positive regulation of leukocyte tethering or rolling"/>
    <property type="evidence" value="ECO:0000250"/>
    <property type="project" value="UniProtKB"/>
</dbReference>
<dbReference type="GO" id="GO:0006486">
    <property type="term" value="P:protein glycosylation"/>
    <property type="evidence" value="ECO:0000266"/>
    <property type="project" value="RGD"/>
</dbReference>
<dbReference type="GO" id="GO:0097503">
    <property type="term" value="P:sialylation"/>
    <property type="evidence" value="ECO:0000266"/>
    <property type="project" value="RGD"/>
</dbReference>
<dbReference type="CDD" id="cd23982">
    <property type="entry name" value="GT29_ST3GAL4"/>
    <property type="match status" value="1"/>
</dbReference>
<dbReference type="FunFam" id="3.90.1480.20:FF:000005">
    <property type="entry name" value="ST3 beta-galactoside alpha-2,3-sialyltransferase 4"/>
    <property type="match status" value="1"/>
</dbReference>
<dbReference type="Gene3D" id="3.90.1480.20">
    <property type="entry name" value="Glycosyl transferase family 29"/>
    <property type="match status" value="1"/>
</dbReference>
<dbReference type="InterPro" id="IPR001675">
    <property type="entry name" value="Glyco_trans_29"/>
</dbReference>
<dbReference type="InterPro" id="IPR051142">
    <property type="entry name" value="Glycosyltransferase_29"/>
</dbReference>
<dbReference type="InterPro" id="IPR038578">
    <property type="entry name" value="GT29-like_sf"/>
</dbReference>
<dbReference type="InterPro" id="IPR012163">
    <property type="entry name" value="Sialyl_trans"/>
</dbReference>
<dbReference type="PANTHER" id="PTHR13713:SF57">
    <property type="entry name" value="CMP-N-ACETYLNEURAMINATE-BETA-GALACTOSAMIDE-ALPHA-2,3-SIALYLTRANSFERASE 4"/>
    <property type="match status" value="1"/>
</dbReference>
<dbReference type="PANTHER" id="PTHR13713">
    <property type="entry name" value="SIALYLTRANSFERASE"/>
    <property type="match status" value="1"/>
</dbReference>
<dbReference type="Pfam" id="PF00777">
    <property type="entry name" value="Glyco_transf_29"/>
    <property type="match status" value="1"/>
</dbReference>
<dbReference type="PIRSF" id="PIRSF005557">
    <property type="entry name" value="Sialyl_trans"/>
    <property type="match status" value="1"/>
</dbReference>
<gene>
    <name type="primary">St3gal4</name>
    <name type="synonym">Siat4c</name>
</gene>
<protein>
    <recommendedName>
        <fullName>CMP-N-acetylneuraminate-beta-galactosamide-alpha-2,3-sialyltransferase 4</fullName>
        <shortName>Alpha 2,3-ST 4</shortName>
        <shortName>Beta-galactoside alpha-2,3-sialyltransferase 4</shortName>
        <ecNumber evidence="2">2.4.3.2</ecNumber>
        <ecNumber evidence="2">2.4.3.4</ecNumber>
    </recommendedName>
    <alternativeName>
        <fullName>Alpha 2,3-sialyltransferase IV</fullName>
    </alternativeName>
    <alternativeName>
        <fullName>Gal-beta-1,3-GalNAc-alpha-2,3-sialyltransferase</fullName>
    </alternativeName>
    <alternativeName>
        <fullName>Gal-beta-1,4-GlcNAc-alpha-2,3-sialyltransferase</fullName>
    </alternativeName>
    <alternativeName>
        <fullName>N-acetyllactosaminide alpha-2,3-sialyltransferase</fullName>
        <ecNumber evidence="2">2.4.3.6</ecNumber>
    </alternativeName>
    <alternativeName>
        <fullName>ST3Gal IV</fullName>
        <shortName>ST3GalIV</shortName>
    </alternativeName>
    <alternativeName>
        <fullName>Sialyltransferase 4C</fullName>
        <shortName>SIAT4-C</shortName>
    </alternativeName>
</protein>
<feature type="chain" id="PRO_0000149265" description="CMP-N-acetylneuraminate-beta-galactosamide-alpha-2,3-sialyltransferase 4">
    <location>
        <begin position="1"/>
        <end position="333"/>
    </location>
</feature>
<feature type="topological domain" description="Cytoplasmic" evidence="4">
    <location>
        <begin position="1"/>
        <end position="8"/>
    </location>
</feature>
<feature type="transmembrane region" description="Helical; Signal-anchor for type II membrane protein" evidence="4">
    <location>
        <begin position="9"/>
        <end position="26"/>
    </location>
</feature>
<feature type="topological domain" description="Lumenal" evidence="4">
    <location>
        <begin position="27"/>
        <end position="333"/>
    </location>
</feature>
<feature type="glycosylation site" description="N-linked (GlcNAc...) asparagine" evidence="4">
    <location>
        <position position="61"/>
    </location>
</feature>
<feature type="glycosylation site" description="N-linked (GlcNAc...) asparagine" evidence="4">
    <location>
        <position position="131"/>
    </location>
</feature>
<feature type="glycosylation site" description="N-linked (GlcNAc...) asparagine" evidence="4">
    <location>
        <position position="310"/>
    </location>
</feature>
<feature type="glycosylation site" description="N-linked (GlcNAc...) asparagine" evidence="4">
    <location>
        <position position="329"/>
    </location>
</feature>
<feature type="disulfide bond" evidence="1">
    <location>
        <begin position="120"/>
        <end position="273"/>
    </location>
</feature>
<keyword id="KW-1015">Disulfide bond</keyword>
<keyword id="KW-0325">Glycoprotein</keyword>
<keyword id="KW-0328">Glycosyltransferase</keyword>
<keyword id="KW-0333">Golgi apparatus</keyword>
<keyword id="KW-0443">Lipid metabolism</keyword>
<keyword id="KW-0472">Membrane</keyword>
<keyword id="KW-1185">Reference proteome</keyword>
<keyword id="KW-0735">Signal-anchor</keyword>
<keyword id="KW-0808">Transferase</keyword>
<keyword id="KW-0812">Transmembrane</keyword>
<keyword id="KW-1133">Transmembrane helix</keyword>
<organism>
    <name type="scientific">Rattus norvegicus</name>
    <name type="common">Rat</name>
    <dbReference type="NCBI Taxonomy" id="10116"/>
    <lineage>
        <taxon>Eukaryota</taxon>
        <taxon>Metazoa</taxon>
        <taxon>Chordata</taxon>
        <taxon>Craniata</taxon>
        <taxon>Vertebrata</taxon>
        <taxon>Euteleostomi</taxon>
        <taxon>Mammalia</taxon>
        <taxon>Eutheria</taxon>
        <taxon>Euarchontoglires</taxon>
        <taxon>Glires</taxon>
        <taxon>Rodentia</taxon>
        <taxon>Myomorpha</taxon>
        <taxon>Muroidea</taxon>
        <taxon>Muridae</taxon>
        <taxon>Murinae</taxon>
        <taxon>Rattus</taxon>
    </lineage>
</organism>
<reference key="1">
    <citation type="submission" date="2004-01" db="EMBL/GenBank/DDBJ databases">
        <title>Phylogeny of sialyltransferases.</title>
        <authorList>
            <person name="Harduin-Lepers A."/>
            <person name="Martinez-Duncker I."/>
            <person name="Mollicone R."/>
            <person name="Delannoy P."/>
            <person name="Oriol R."/>
        </authorList>
    </citation>
    <scope>NUCLEOTIDE SEQUENCE [MRNA]</scope>
</reference>
<reference key="2">
    <citation type="journal article" date="2004" name="Genome Res.">
        <title>The status, quality, and expansion of the NIH full-length cDNA project: the Mammalian Gene Collection (MGC).</title>
        <authorList>
            <consortium name="The MGC Project Team"/>
        </authorList>
    </citation>
    <scope>NUCLEOTIDE SEQUENCE [LARGE SCALE MRNA]</scope>
    <source>
        <tissue>Brain</tissue>
    </source>
</reference>
<reference key="3">
    <citation type="journal article" date="1995" name="J. Neurochem.">
        <title>Characterization of sialyltransferase-IV activity and its involvement in the c-pathway of brain ganglioside metabolism.</title>
        <authorList>
            <person name="Freischuetz B."/>
            <person name="Saito M."/>
            <person name="Rahmann H."/>
            <person name="Yu R.K."/>
        </authorList>
    </citation>
    <scope>FUNCTION</scope>
    <scope>CATALYTIC ACTIVITY</scope>
</reference>
<sequence>MTSKSHWKLLALALVLVVVMVWYSISREDRYIEFFYFPVSEKKEPCFQGEAERQASKIFGNHSREQPIFLQLKDYFWVKTPSAYELPFGTKGSEDLLLRVLAITSYSIPESIQSLECRRCVVVGNGHRLKNSSLGGVINKYDVVIRLNNAPVAGYEGDVGSKTTIRLFYPESAHFDPKIENNPDTLLVLVAFKAMDFHWIETILSDKKRVRKGFWKQPPLIWDVNPKQIRILNPFFMEIAADKLLSLPIQQPRKIKQKPTTGLLAITLALHLCDLVHIAGFGYPDAYNKKQTIHYYEQITLKSMAGSGHNVSQEAVAIKRMLEMGAVKNLTYF</sequence>
<accession>P61131</accession>
<proteinExistence type="evidence at protein level"/>